<protein>
    <recommendedName>
        <fullName evidence="1">Small ribosomal subunit protein bS6</fullName>
    </recommendedName>
    <alternativeName>
        <fullName evidence="2">30S ribosomal protein S6</fullName>
    </alternativeName>
</protein>
<accession>Q6A5M9</accession>
<organism>
    <name type="scientific">Cutibacterium acnes (strain DSM 16379 / KPA171202)</name>
    <name type="common">Propionibacterium acnes</name>
    <dbReference type="NCBI Taxonomy" id="267747"/>
    <lineage>
        <taxon>Bacteria</taxon>
        <taxon>Bacillati</taxon>
        <taxon>Actinomycetota</taxon>
        <taxon>Actinomycetes</taxon>
        <taxon>Propionibacteriales</taxon>
        <taxon>Propionibacteriaceae</taxon>
        <taxon>Cutibacterium</taxon>
    </lineage>
</organism>
<sequence length="96" mass="11253">MRKYEVMIIIDPTVEERQVDSLMEKYLKVITDEKGTVDNVDVWGKRRLAYDIQKKSEGIYVVVNATCEPATIQELDRLLAIDEKIMRTKVMRPEIH</sequence>
<comment type="function">
    <text evidence="1">Binds together with bS18 to 16S ribosomal RNA.</text>
</comment>
<comment type="similarity">
    <text evidence="1">Belongs to the bacterial ribosomal protein bS6 family.</text>
</comment>
<dbReference type="EMBL" id="AE017283">
    <property type="protein sequence ID" value="AAT83934.1"/>
    <property type="molecule type" value="Genomic_DNA"/>
</dbReference>
<dbReference type="RefSeq" id="WP_002514175.1">
    <property type="nucleotide sequence ID" value="NZ_CP025935.1"/>
</dbReference>
<dbReference type="PDB" id="8CRX">
    <property type="method" value="EM"/>
    <property type="resolution" value="2.78 A"/>
    <property type="chains" value="F=1-96"/>
</dbReference>
<dbReference type="PDB" id="8CWO">
    <property type="method" value="EM"/>
    <property type="resolution" value="2.84 A"/>
    <property type="chains" value="F=1-96"/>
</dbReference>
<dbReference type="PDBsum" id="8CRX"/>
<dbReference type="PDBsum" id="8CWO"/>
<dbReference type="SMR" id="Q6A5M9"/>
<dbReference type="EnsemblBacteria" id="AAT83934">
    <property type="protein sequence ID" value="AAT83934"/>
    <property type="gene ID" value="PPA2230"/>
</dbReference>
<dbReference type="GeneID" id="92858168"/>
<dbReference type="KEGG" id="pac:PPA2230"/>
<dbReference type="eggNOG" id="COG0360">
    <property type="taxonomic scope" value="Bacteria"/>
</dbReference>
<dbReference type="HOGENOM" id="CLU_113441_5_3_11"/>
<dbReference type="Proteomes" id="UP000000603">
    <property type="component" value="Chromosome"/>
</dbReference>
<dbReference type="GO" id="GO:0005737">
    <property type="term" value="C:cytoplasm"/>
    <property type="evidence" value="ECO:0007669"/>
    <property type="project" value="UniProtKB-ARBA"/>
</dbReference>
<dbReference type="GO" id="GO:1990904">
    <property type="term" value="C:ribonucleoprotein complex"/>
    <property type="evidence" value="ECO:0007669"/>
    <property type="project" value="UniProtKB-KW"/>
</dbReference>
<dbReference type="GO" id="GO:0005840">
    <property type="term" value="C:ribosome"/>
    <property type="evidence" value="ECO:0007669"/>
    <property type="project" value="UniProtKB-KW"/>
</dbReference>
<dbReference type="GO" id="GO:0070181">
    <property type="term" value="F:small ribosomal subunit rRNA binding"/>
    <property type="evidence" value="ECO:0007669"/>
    <property type="project" value="TreeGrafter"/>
</dbReference>
<dbReference type="GO" id="GO:0003735">
    <property type="term" value="F:structural constituent of ribosome"/>
    <property type="evidence" value="ECO:0007669"/>
    <property type="project" value="InterPro"/>
</dbReference>
<dbReference type="GO" id="GO:0006412">
    <property type="term" value="P:translation"/>
    <property type="evidence" value="ECO:0007669"/>
    <property type="project" value="UniProtKB-UniRule"/>
</dbReference>
<dbReference type="CDD" id="cd00473">
    <property type="entry name" value="bS6"/>
    <property type="match status" value="1"/>
</dbReference>
<dbReference type="FunFam" id="3.30.70.60:FF:000002">
    <property type="entry name" value="30S ribosomal protein S6"/>
    <property type="match status" value="1"/>
</dbReference>
<dbReference type="Gene3D" id="3.30.70.60">
    <property type="match status" value="1"/>
</dbReference>
<dbReference type="HAMAP" id="MF_00360">
    <property type="entry name" value="Ribosomal_bS6"/>
    <property type="match status" value="1"/>
</dbReference>
<dbReference type="InterPro" id="IPR000529">
    <property type="entry name" value="Ribosomal_bS6"/>
</dbReference>
<dbReference type="InterPro" id="IPR035980">
    <property type="entry name" value="Ribosomal_bS6_sf"/>
</dbReference>
<dbReference type="InterPro" id="IPR020814">
    <property type="entry name" value="Ribosomal_S6_plastid/chlpt"/>
</dbReference>
<dbReference type="InterPro" id="IPR014717">
    <property type="entry name" value="Transl_elong_EF1B/ribsomal_bS6"/>
</dbReference>
<dbReference type="NCBIfam" id="TIGR00166">
    <property type="entry name" value="S6"/>
    <property type="match status" value="1"/>
</dbReference>
<dbReference type="PANTHER" id="PTHR21011">
    <property type="entry name" value="MITOCHONDRIAL 28S RIBOSOMAL PROTEIN S6"/>
    <property type="match status" value="1"/>
</dbReference>
<dbReference type="PANTHER" id="PTHR21011:SF1">
    <property type="entry name" value="SMALL RIBOSOMAL SUBUNIT PROTEIN BS6M"/>
    <property type="match status" value="1"/>
</dbReference>
<dbReference type="Pfam" id="PF01250">
    <property type="entry name" value="Ribosomal_S6"/>
    <property type="match status" value="1"/>
</dbReference>
<dbReference type="SUPFAM" id="SSF54995">
    <property type="entry name" value="Ribosomal protein S6"/>
    <property type="match status" value="1"/>
</dbReference>
<name>RS6_CUTAK</name>
<proteinExistence type="evidence at protein level"/>
<reference key="1">
    <citation type="journal article" date="2004" name="Science">
        <title>The complete genome sequence of Propionibacterium acnes, a commensal of human skin.</title>
        <authorList>
            <person name="Brueggemann H."/>
            <person name="Henne A."/>
            <person name="Hoster F."/>
            <person name="Liesegang H."/>
            <person name="Wiezer A."/>
            <person name="Strittmatter A."/>
            <person name="Hujer S."/>
            <person name="Duerre P."/>
            <person name="Gottschalk G."/>
        </authorList>
    </citation>
    <scope>NUCLEOTIDE SEQUENCE [LARGE SCALE GENOMIC DNA]</scope>
    <source>
        <strain>DSM 16379 / KPA171202</strain>
    </source>
</reference>
<feature type="chain" id="PRO_0000176815" description="Small ribosomal subunit protein bS6">
    <location>
        <begin position="1"/>
        <end position="96"/>
    </location>
</feature>
<feature type="strand" evidence="3">
    <location>
        <begin position="2"/>
        <end position="10"/>
    </location>
</feature>
<feature type="helix" evidence="3">
    <location>
        <begin position="18"/>
        <end position="31"/>
    </location>
</feature>
<feature type="turn" evidence="3">
    <location>
        <begin position="32"/>
        <end position="34"/>
    </location>
</feature>
<feature type="strand" evidence="3">
    <location>
        <begin position="36"/>
        <end position="52"/>
    </location>
</feature>
<feature type="strand" evidence="3">
    <location>
        <begin position="55"/>
        <end position="67"/>
    </location>
</feature>
<feature type="helix" evidence="3">
    <location>
        <begin position="69"/>
        <end position="81"/>
    </location>
</feature>
<feature type="strand" evidence="3">
    <location>
        <begin position="83"/>
        <end position="91"/>
    </location>
</feature>
<keyword id="KW-0002">3D-structure</keyword>
<keyword id="KW-0687">Ribonucleoprotein</keyword>
<keyword id="KW-0689">Ribosomal protein</keyword>
<keyword id="KW-0694">RNA-binding</keyword>
<keyword id="KW-0699">rRNA-binding</keyword>
<evidence type="ECO:0000255" key="1">
    <source>
        <dbReference type="HAMAP-Rule" id="MF_00360"/>
    </source>
</evidence>
<evidence type="ECO:0000305" key="2"/>
<evidence type="ECO:0007829" key="3">
    <source>
        <dbReference type="PDB" id="8CWO"/>
    </source>
</evidence>
<gene>
    <name evidence="1" type="primary">rpsF</name>
    <name type="ordered locus">PPA2230</name>
</gene>